<gene>
    <name type="primary">ppsA</name>
    <name type="ordered locus">DR_1727</name>
</gene>
<proteinExistence type="inferred from homology"/>
<dbReference type="EC" id="2.7.9.2"/>
<dbReference type="EMBL" id="AE000513">
    <property type="protein sequence ID" value="AAF11283.1"/>
    <property type="molecule type" value="Genomic_DNA"/>
</dbReference>
<dbReference type="EMBL" id="AB016803">
    <property type="protein sequence ID" value="BAA32387.1"/>
    <property type="molecule type" value="Genomic_DNA"/>
</dbReference>
<dbReference type="PIR" id="D75361">
    <property type="entry name" value="D75361"/>
</dbReference>
<dbReference type="PIR" id="T44369">
    <property type="entry name" value="T44369"/>
</dbReference>
<dbReference type="RefSeq" id="NP_295450.1">
    <property type="nucleotide sequence ID" value="NC_001263.1"/>
</dbReference>
<dbReference type="RefSeq" id="WP_010888362.1">
    <property type="nucleotide sequence ID" value="NC_001263.1"/>
</dbReference>
<dbReference type="SMR" id="O83026"/>
<dbReference type="FunCoup" id="O83026">
    <property type="interactions" value="3"/>
</dbReference>
<dbReference type="STRING" id="243230.DR_1727"/>
<dbReference type="PaxDb" id="243230-DR_1727"/>
<dbReference type="EnsemblBacteria" id="AAF11283">
    <property type="protein sequence ID" value="AAF11283"/>
    <property type="gene ID" value="DR_1727"/>
</dbReference>
<dbReference type="GeneID" id="69517965"/>
<dbReference type="KEGG" id="dra:DR_1727"/>
<dbReference type="PATRIC" id="fig|243230.17.peg.1936"/>
<dbReference type="eggNOG" id="COG0574">
    <property type="taxonomic scope" value="Bacteria"/>
</dbReference>
<dbReference type="eggNOG" id="COG1080">
    <property type="taxonomic scope" value="Bacteria"/>
</dbReference>
<dbReference type="HOGENOM" id="CLU_007308_6_2_0"/>
<dbReference type="InParanoid" id="O83026"/>
<dbReference type="OrthoDB" id="9765468at2"/>
<dbReference type="UniPathway" id="UPA00138"/>
<dbReference type="Proteomes" id="UP000002524">
    <property type="component" value="Chromosome 1"/>
</dbReference>
<dbReference type="GO" id="GO:0005524">
    <property type="term" value="F:ATP binding"/>
    <property type="evidence" value="ECO:0007669"/>
    <property type="project" value="UniProtKB-KW"/>
</dbReference>
<dbReference type="GO" id="GO:0046872">
    <property type="term" value="F:metal ion binding"/>
    <property type="evidence" value="ECO:0007669"/>
    <property type="project" value="UniProtKB-KW"/>
</dbReference>
<dbReference type="GO" id="GO:0008986">
    <property type="term" value="F:pyruvate, water dikinase activity"/>
    <property type="evidence" value="ECO:0007669"/>
    <property type="project" value="UniProtKB-EC"/>
</dbReference>
<dbReference type="GO" id="GO:0006094">
    <property type="term" value="P:gluconeogenesis"/>
    <property type="evidence" value="ECO:0007669"/>
    <property type="project" value="UniProtKB-UniPathway"/>
</dbReference>
<dbReference type="FunFam" id="3.20.20.60:FF:000010">
    <property type="entry name" value="Phosphoenolpyruvate synthase"/>
    <property type="match status" value="1"/>
</dbReference>
<dbReference type="FunFam" id="3.30.1490.20:FF:000010">
    <property type="entry name" value="Phosphoenolpyruvate synthase"/>
    <property type="match status" value="1"/>
</dbReference>
<dbReference type="FunFam" id="3.30.470.20:FF:000017">
    <property type="entry name" value="Phosphoenolpyruvate synthase"/>
    <property type="match status" value="1"/>
</dbReference>
<dbReference type="FunFam" id="3.50.30.10:FF:000002">
    <property type="entry name" value="Phosphoenolpyruvate synthase"/>
    <property type="match status" value="1"/>
</dbReference>
<dbReference type="Gene3D" id="3.30.1490.20">
    <property type="entry name" value="ATP-grasp fold, A domain"/>
    <property type="match status" value="1"/>
</dbReference>
<dbReference type="Gene3D" id="3.30.470.20">
    <property type="entry name" value="ATP-grasp fold, B domain"/>
    <property type="match status" value="1"/>
</dbReference>
<dbReference type="Gene3D" id="3.20.20.60">
    <property type="entry name" value="Phosphoenolpyruvate-binding domains"/>
    <property type="match status" value="1"/>
</dbReference>
<dbReference type="Gene3D" id="3.50.30.10">
    <property type="entry name" value="Phosphohistidine domain"/>
    <property type="match status" value="1"/>
</dbReference>
<dbReference type="InterPro" id="IPR013815">
    <property type="entry name" value="ATP_grasp_subdomain_1"/>
</dbReference>
<dbReference type="InterPro" id="IPR008279">
    <property type="entry name" value="PEP-util_enz_mobile_dom"/>
</dbReference>
<dbReference type="InterPro" id="IPR006319">
    <property type="entry name" value="PEP_synth"/>
</dbReference>
<dbReference type="InterPro" id="IPR018274">
    <property type="entry name" value="PEP_util_AS"/>
</dbReference>
<dbReference type="InterPro" id="IPR000121">
    <property type="entry name" value="PEP_util_C"/>
</dbReference>
<dbReference type="InterPro" id="IPR023151">
    <property type="entry name" value="PEP_util_CS"/>
</dbReference>
<dbReference type="InterPro" id="IPR036637">
    <property type="entry name" value="Phosphohistidine_dom_sf"/>
</dbReference>
<dbReference type="InterPro" id="IPR002192">
    <property type="entry name" value="PPDK_AMP/ATP-bd"/>
</dbReference>
<dbReference type="InterPro" id="IPR015813">
    <property type="entry name" value="Pyrv/PenolPyrv_kinase-like_dom"/>
</dbReference>
<dbReference type="InterPro" id="IPR040442">
    <property type="entry name" value="Pyrv_kinase-like_dom_sf"/>
</dbReference>
<dbReference type="NCBIfam" id="TIGR01418">
    <property type="entry name" value="PEP_synth"/>
    <property type="match status" value="1"/>
</dbReference>
<dbReference type="NCBIfam" id="NF005057">
    <property type="entry name" value="PRK06464.1"/>
    <property type="match status" value="1"/>
</dbReference>
<dbReference type="PANTHER" id="PTHR43030">
    <property type="entry name" value="PHOSPHOENOLPYRUVATE SYNTHASE"/>
    <property type="match status" value="1"/>
</dbReference>
<dbReference type="PANTHER" id="PTHR43030:SF1">
    <property type="entry name" value="PHOSPHOENOLPYRUVATE SYNTHASE"/>
    <property type="match status" value="1"/>
</dbReference>
<dbReference type="Pfam" id="PF00391">
    <property type="entry name" value="PEP-utilizers"/>
    <property type="match status" value="1"/>
</dbReference>
<dbReference type="Pfam" id="PF02896">
    <property type="entry name" value="PEP-utilizers_C"/>
    <property type="match status" value="1"/>
</dbReference>
<dbReference type="Pfam" id="PF01326">
    <property type="entry name" value="PPDK_N"/>
    <property type="match status" value="1"/>
</dbReference>
<dbReference type="PIRSF" id="PIRSF000854">
    <property type="entry name" value="PEP_synthase"/>
    <property type="match status" value="1"/>
</dbReference>
<dbReference type="PRINTS" id="PR01736">
    <property type="entry name" value="PHPHTRNFRASE"/>
</dbReference>
<dbReference type="SUPFAM" id="SSF56059">
    <property type="entry name" value="Glutathione synthetase ATP-binding domain-like"/>
    <property type="match status" value="1"/>
</dbReference>
<dbReference type="SUPFAM" id="SSF51621">
    <property type="entry name" value="Phosphoenolpyruvate/pyruvate domain"/>
    <property type="match status" value="1"/>
</dbReference>
<dbReference type="SUPFAM" id="SSF52009">
    <property type="entry name" value="Phosphohistidine domain"/>
    <property type="match status" value="1"/>
</dbReference>
<dbReference type="PROSITE" id="PS00742">
    <property type="entry name" value="PEP_ENZYMES_2"/>
    <property type="match status" value="1"/>
</dbReference>
<dbReference type="PROSITE" id="PS00370">
    <property type="entry name" value="PEP_ENZYMES_PHOS_SITE"/>
    <property type="match status" value="1"/>
</dbReference>
<organism>
    <name type="scientific">Deinococcus radiodurans (strain ATCC 13939 / DSM 20539 / JCM 16871 / CCUG 27074 / LMG 4051 / NBRC 15346 / NCIMB 9279 / VKM B-1422 / R1)</name>
    <dbReference type="NCBI Taxonomy" id="243230"/>
    <lineage>
        <taxon>Bacteria</taxon>
        <taxon>Thermotogati</taxon>
        <taxon>Deinococcota</taxon>
        <taxon>Deinococci</taxon>
        <taxon>Deinococcales</taxon>
        <taxon>Deinococcaceae</taxon>
        <taxon>Deinococcus</taxon>
    </lineage>
</organism>
<comment type="function">
    <text evidence="1">Catalyzes the phosphorylation of pyruvate to phosphoenolpyruvate.</text>
</comment>
<comment type="catalytic activity">
    <reaction>
        <text>pyruvate + ATP + H2O = phosphoenolpyruvate + AMP + phosphate + 2 H(+)</text>
        <dbReference type="Rhea" id="RHEA:11364"/>
        <dbReference type="ChEBI" id="CHEBI:15361"/>
        <dbReference type="ChEBI" id="CHEBI:15377"/>
        <dbReference type="ChEBI" id="CHEBI:15378"/>
        <dbReference type="ChEBI" id="CHEBI:30616"/>
        <dbReference type="ChEBI" id="CHEBI:43474"/>
        <dbReference type="ChEBI" id="CHEBI:58702"/>
        <dbReference type="ChEBI" id="CHEBI:456215"/>
        <dbReference type="EC" id="2.7.9.2"/>
    </reaction>
</comment>
<comment type="cofactor">
    <cofactor evidence="1">
        <name>Mg(2+)</name>
        <dbReference type="ChEBI" id="CHEBI:18420"/>
    </cofactor>
</comment>
<comment type="pathway">
    <text>Carbohydrate biosynthesis; gluconeogenesis.</text>
</comment>
<comment type="domain">
    <text evidence="1">The N-terminal domain contains the ATP/Pi binding site, the central domain the pyrophosphate/phosphate carrier histidine, and the C-terminal domain the pyruvate binding site.</text>
</comment>
<comment type="miscellaneous">
    <text evidence="1">The reaction takes place in three steps, mediated by a phosphocarrier histidine residue located on the surface of the central domain. The two first partial reactions are catalyzed at an active site located on the N-terminal domain, and the third partial reaction is catalyzed at an active site located on the C-terminal domain. For catalytic turnover, the central domain swivels from the concave surface of the N-terminal domain to that of the C-terminal domain (By similarity).</text>
</comment>
<comment type="similarity">
    <text evidence="2">Belongs to the PEP-utilizing enzyme family.</text>
</comment>
<sequence length="780" mass="84895">MDMIRPFGTLRMTDVEIVGGKNASIGEMIQGLAQADVRVPGGFATTADAFRLFLRENQIEEKINAKLQALDVNDVNALVAAGKEIRGWVEEARLPAALEDAIRQAYGEMGDDPDVAVRSSATAEDLPEASFAGQQETFLNVRGIEEVLNHVKLVFASLYNDRAISYRVHHNFEHSEVALSAGVQRMVRTDLGVSGVAFTLDTESGFRDAVFVTSSYGLGEMVVQGAVNPDEFFVYKPALEQGKKAVLRRTRGSKQKKMIYAEAGGVKTVDVDEAEQRAFSLSDDDLTELARQCVTIEKHYGRPMDIEWGKDGRDVQIYILQARPETVQSRAGRTLERFELTGKGDVLVEGRAVGSRIGAGVVRVVKSLDQMDSVQDGDILVADMTDPDWEPVMKRASAIVTNRGGRTCHAAIIARELGIPAVVGTGNATRELHNGDEVTVSCAEGDTGYVYAGRLDFHVNRVELDAMPEVGMKIMMNVASPDRAFSFAALPNEGVGLARVEFIISNVIGIHPRALLDYPDVPADVKAQIEEKTAGYASPRDFFREKLAEGVASIAAAFAPKPVIVRLSDFKSNEYHHLIGGPAYEPTEENPMIGFRGASRYRSADFAEAFALECQAMKQVRDDMGLTNVQLMIPFVRTVAEGQRILEILAANGLTQRENDLKVIMMCEVPSNALLADQFLDLFDGFSIGSNDLTQLTLALDRDSGLVADMFDEQNEAVLALMGMAIKAAKAKGKYVGICGQGPSDHPALAQWLMDQGIDSVSLNPDSVLSTWLHLAGEQA</sequence>
<name>PPSA_DEIRA</name>
<accession>O83026</accession>
<evidence type="ECO:0000250" key="1"/>
<evidence type="ECO:0000305" key="2"/>
<keyword id="KW-0067">ATP-binding</keyword>
<keyword id="KW-0418">Kinase</keyword>
<keyword id="KW-0460">Magnesium</keyword>
<keyword id="KW-0479">Metal-binding</keyword>
<keyword id="KW-0547">Nucleotide-binding</keyword>
<keyword id="KW-1185">Reference proteome</keyword>
<keyword id="KW-0808">Transferase</keyword>
<reference key="1">
    <citation type="journal article" date="1999" name="Science">
        <title>Genome sequence of the radioresistant bacterium Deinococcus radiodurans R1.</title>
        <authorList>
            <person name="White O."/>
            <person name="Eisen J.A."/>
            <person name="Heidelberg J.F."/>
            <person name="Hickey E.K."/>
            <person name="Peterson J.D."/>
            <person name="Dodson R.J."/>
            <person name="Haft D.H."/>
            <person name="Gwinn M.L."/>
            <person name="Nelson W.C."/>
            <person name="Richardson D.L."/>
            <person name="Moffat K.S."/>
            <person name="Qin H."/>
            <person name="Jiang L."/>
            <person name="Pamphile W."/>
            <person name="Crosby M."/>
            <person name="Shen M."/>
            <person name="Vamathevan J.J."/>
            <person name="Lam P."/>
            <person name="McDonald L.A."/>
            <person name="Utterback T.R."/>
            <person name="Zalewski C."/>
            <person name="Makarova K.S."/>
            <person name="Aravind L."/>
            <person name="Daly M.J."/>
            <person name="Minton K.W."/>
            <person name="Fleischmann R.D."/>
            <person name="Ketchum K.A."/>
            <person name="Nelson K.E."/>
            <person name="Salzberg S.L."/>
            <person name="Smith H.O."/>
            <person name="Venter J.C."/>
            <person name="Fraser C.M."/>
        </authorList>
    </citation>
    <scope>NUCLEOTIDE SEQUENCE [LARGE SCALE GENOMIC DNA]</scope>
    <source>
        <strain>ATCC 13939 / DSM 20539 / JCM 16871 / CCUG 27074 / LMG 4051 / NBRC 15346 / NCIMB 9279 / VKM B-1422 / R1</strain>
    </source>
</reference>
<reference key="2">
    <citation type="submission" date="1998-08" db="EMBL/GenBank/DDBJ databases">
        <title>IS8301: the second insertion sequence element from Deinococcus radiodurans.</title>
        <authorList>
            <person name="Narumi I."/>
            <person name="Islam S."/>
            <person name="Cherdchu K."/>
            <person name="Kikuchi M."/>
            <person name="Watanabe H."/>
            <person name="Kitayama S."/>
            <person name="Yamamoto K."/>
        </authorList>
    </citation>
    <scope>NUCLEOTIDE SEQUENCE [GENOMIC DNA] OF 259-780</scope>
</reference>
<protein>
    <recommendedName>
        <fullName>Phosphoenolpyruvate synthase</fullName>
        <shortName>PEP synthase</shortName>
        <ecNumber>2.7.9.2</ecNumber>
    </recommendedName>
    <alternativeName>
        <fullName>Pyruvate, water dikinase</fullName>
    </alternativeName>
</protein>
<feature type="chain" id="PRO_0000147033" description="Phosphoenolpyruvate synthase">
    <location>
        <begin position="1"/>
        <end position="780"/>
    </location>
</feature>
<feature type="active site" description="Tele-phosphohistidine intermediate" evidence="1">
    <location>
        <position position="409"/>
    </location>
</feature>
<feature type="binding site" evidence="1">
    <location>
        <position position="499"/>
    </location>
    <ligand>
        <name>substrate</name>
    </ligand>
</feature>
<feature type="binding site" evidence="1">
    <location>
        <position position="566"/>
    </location>
    <ligand>
        <name>substrate</name>
    </ligand>
</feature>
<feature type="binding site" evidence="1">
    <location>
        <position position="668"/>
    </location>
    <ligand>
        <name>Mg(2+)</name>
        <dbReference type="ChEBI" id="CHEBI:18420"/>
    </ligand>
</feature>
<feature type="binding site" evidence="1">
    <location>
        <position position="668"/>
    </location>
    <ligand>
        <name>substrate</name>
    </ligand>
</feature>
<feature type="binding site" evidence="1">
    <location>
        <position position="689"/>
    </location>
    <ligand>
        <name>substrate</name>
    </ligand>
</feature>
<feature type="binding site" evidence="1">
    <location>
        <position position="690"/>
    </location>
    <ligand>
        <name>substrate</name>
    </ligand>
</feature>
<feature type="binding site" evidence="1">
    <location>
        <position position="691"/>
    </location>
    <ligand>
        <name>substrate</name>
    </ligand>
</feature>
<feature type="binding site" evidence="1">
    <location>
        <position position="692"/>
    </location>
    <ligand>
        <name>Mg(2+)</name>
        <dbReference type="ChEBI" id="CHEBI:18420"/>
    </ligand>
</feature>
<feature type="binding site" evidence="1">
    <location>
        <position position="692"/>
    </location>
    <ligand>
        <name>substrate</name>
    </ligand>
</feature>